<gene>
    <name evidence="1" type="primary">aroA</name>
    <name type="ordered locus">THEYE_A1767</name>
</gene>
<name>AROA_THEYD</name>
<sequence length="430" mass="46959">MNRIIKKAKTLKGEITPPPDKSISHRAVMFASLAKGQSRIKNFLWAKDPLSSLNAMKSLGVEITITDSKEIIVNGKGLHSLKESDNVIDCGNSGTTIRLLSGIVAGQRFLTVLTGDDSLRYRPMKRIINPLSLMGANIMGRAENKFPPIVIKGGFLKGISYEMPIASAQVKSAILLAGLYAKGETTLTEPHKSRDHTEKMLKNMGVNIIINDNTVKLSPVDHELNCFDITIPNDFSSAAFFIAGACLVPDSEILIKQVNLNETRTGFIEVLKNMGATIEIFNITEQGGEPVGDIFAKSSSELKGINVQGDIIPKLIDEFPILCVVATQAEGKTVIKDAKDLRAKESDRIKAMTSELKKMGVKIKEFEDGVEIEGPCKLIGTEVYSYKDHRIAMALSIAGVIAEGETTIKDANCVDISFPEFYSLLEMLQK</sequence>
<protein>
    <recommendedName>
        <fullName evidence="1">3-phosphoshikimate 1-carboxyvinyltransferase</fullName>
        <ecNumber evidence="1">2.5.1.19</ecNumber>
    </recommendedName>
    <alternativeName>
        <fullName evidence="1">5-enolpyruvylshikimate-3-phosphate synthase</fullName>
        <shortName evidence="1">EPSP synthase</shortName>
        <shortName evidence="1">EPSPS</shortName>
    </alternativeName>
</protein>
<evidence type="ECO:0000255" key="1">
    <source>
        <dbReference type="HAMAP-Rule" id="MF_00210"/>
    </source>
</evidence>
<reference key="1">
    <citation type="submission" date="2008-08" db="EMBL/GenBank/DDBJ databases">
        <title>The complete genome sequence of Thermodesulfovibrio yellowstonii strain ATCC 51303 / DSM 11347 / YP87.</title>
        <authorList>
            <person name="Dodson R.J."/>
            <person name="Durkin A.S."/>
            <person name="Wu M."/>
            <person name="Eisen J."/>
            <person name="Sutton G."/>
        </authorList>
    </citation>
    <scope>NUCLEOTIDE SEQUENCE [LARGE SCALE GENOMIC DNA]</scope>
    <source>
        <strain>ATCC 51303 / DSM 11347 / YP87</strain>
    </source>
</reference>
<organism>
    <name type="scientific">Thermodesulfovibrio yellowstonii (strain ATCC 51303 / DSM 11347 / YP87)</name>
    <dbReference type="NCBI Taxonomy" id="289376"/>
    <lineage>
        <taxon>Bacteria</taxon>
        <taxon>Pseudomonadati</taxon>
        <taxon>Nitrospirota</taxon>
        <taxon>Thermodesulfovibrionia</taxon>
        <taxon>Thermodesulfovibrionales</taxon>
        <taxon>Thermodesulfovibrionaceae</taxon>
        <taxon>Thermodesulfovibrio</taxon>
    </lineage>
</organism>
<proteinExistence type="inferred from homology"/>
<accession>B5YH68</accession>
<feature type="chain" id="PRO_1000099762" description="3-phosphoshikimate 1-carboxyvinyltransferase">
    <location>
        <begin position="1"/>
        <end position="430"/>
    </location>
</feature>
<feature type="active site" description="Proton acceptor" evidence="1">
    <location>
        <position position="317"/>
    </location>
</feature>
<feature type="binding site" evidence="1">
    <location>
        <position position="21"/>
    </location>
    <ligand>
        <name>3-phosphoshikimate</name>
        <dbReference type="ChEBI" id="CHEBI:145989"/>
    </ligand>
</feature>
<feature type="binding site" evidence="1">
    <location>
        <position position="21"/>
    </location>
    <ligand>
        <name>phosphoenolpyruvate</name>
        <dbReference type="ChEBI" id="CHEBI:58702"/>
    </ligand>
</feature>
<feature type="binding site" evidence="1">
    <location>
        <position position="22"/>
    </location>
    <ligand>
        <name>3-phosphoshikimate</name>
        <dbReference type="ChEBI" id="CHEBI:145989"/>
    </ligand>
</feature>
<feature type="binding site" evidence="1">
    <location>
        <position position="26"/>
    </location>
    <ligand>
        <name>3-phosphoshikimate</name>
        <dbReference type="ChEBI" id="CHEBI:145989"/>
    </ligand>
</feature>
<feature type="binding site" evidence="1">
    <location>
        <position position="94"/>
    </location>
    <ligand>
        <name>phosphoenolpyruvate</name>
        <dbReference type="ChEBI" id="CHEBI:58702"/>
    </ligand>
</feature>
<feature type="binding site" evidence="1">
    <location>
        <position position="122"/>
    </location>
    <ligand>
        <name>phosphoenolpyruvate</name>
        <dbReference type="ChEBI" id="CHEBI:58702"/>
    </ligand>
</feature>
<feature type="binding site" evidence="1">
    <location>
        <position position="167"/>
    </location>
    <ligand>
        <name>3-phosphoshikimate</name>
        <dbReference type="ChEBI" id="CHEBI:145989"/>
    </ligand>
</feature>
<feature type="binding site" evidence="1">
    <location>
        <position position="169"/>
    </location>
    <ligand>
        <name>3-phosphoshikimate</name>
        <dbReference type="ChEBI" id="CHEBI:145989"/>
    </ligand>
</feature>
<feature type="binding site" evidence="1">
    <location>
        <position position="169"/>
    </location>
    <ligand>
        <name>phosphoenolpyruvate</name>
        <dbReference type="ChEBI" id="CHEBI:58702"/>
    </ligand>
</feature>
<feature type="binding site" evidence="1">
    <location>
        <position position="317"/>
    </location>
    <ligand>
        <name>3-phosphoshikimate</name>
        <dbReference type="ChEBI" id="CHEBI:145989"/>
    </ligand>
</feature>
<feature type="binding site" evidence="1">
    <location>
        <position position="344"/>
    </location>
    <ligand>
        <name>3-phosphoshikimate</name>
        <dbReference type="ChEBI" id="CHEBI:145989"/>
    </ligand>
</feature>
<feature type="binding site" evidence="1">
    <location>
        <position position="348"/>
    </location>
    <ligand>
        <name>phosphoenolpyruvate</name>
        <dbReference type="ChEBI" id="CHEBI:58702"/>
    </ligand>
</feature>
<feature type="binding site" evidence="1">
    <location>
        <position position="390"/>
    </location>
    <ligand>
        <name>phosphoenolpyruvate</name>
        <dbReference type="ChEBI" id="CHEBI:58702"/>
    </ligand>
</feature>
<keyword id="KW-0028">Amino-acid biosynthesis</keyword>
<keyword id="KW-0057">Aromatic amino acid biosynthesis</keyword>
<keyword id="KW-0963">Cytoplasm</keyword>
<keyword id="KW-1185">Reference proteome</keyword>
<keyword id="KW-0808">Transferase</keyword>
<comment type="function">
    <text evidence="1">Catalyzes the transfer of the enolpyruvyl moiety of phosphoenolpyruvate (PEP) to the 5-hydroxyl of shikimate-3-phosphate (S3P) to produce enolpyruvyl shikimate-3-phosphate and inorganic phosphate.</text>
</comment>
<comment type="catalytic activity">
    <reaction evidence="1">
        <text>3-phosphoshikimate + phosphoenolpyruvate = 5-O-(1-carboxyvinyl)-3-phosphoshikimate + phosphate</text>
        <dbReference type="Rhea" id="RHEA:21256"/>
        <dbReference type="ChEBI" id="CHEBI:43474"/>
        <dbReference type="ChEBI" id="CHEBI:57701"/>
        <dbReference type="ChEBI" id="CHEBI:58702"/>
        <dbReference type="ChEBI" id="CHEBI:145989"/>
        <dbReference type="EC" id="2.5.1.19"/>
    </reaction>
    <physiologicalReaction direction="left-to-right" evidence="1">
        <dbReference type="Rhea" id="RHEA:21257"/>
    </physiologicalReaction>
</comment>
<comment type="pathway">
    <text evidence="1">Metabolic intermediate biosynthesis; chorismate biosynthesis; chorismate from D-erythrose 4-phosphate and phosphoenolpyruvate: step 6/7.</text>
</comment>
<comment type="subunit">
    <text evidence="1">Monomer.</text>
</comment>
<comment type="subcellular location">
    <subcellularLocation>
        <location evidence="1">Cytoplasm</location>
    </subcellularLocation>
</comment>
<comment type="similarity">
    <text evidence="1">Belongs to the EPSP synthase family.</text>
</comment>
<dbReference type="EC" id="2.5.1.19" evidence="1"/>
<dbReference type="EMBL" id="CP001147">
    <property type="protein sequence ID" value="ACI20539.1"/>
    <property type="molecule type" value="Genomic_DNA"/>
</dbReference>
<dbReference type="RefSeq" id="WP_012545275.1">
    <property type="nucleotide sequence ID" value="NC_011296.1"/>
</dbReference>
<dbReference type="RefSeq" id="YP_002249558.1">
    <property type="nucleotide sequence ID" value="NC_011296.1"/>
</dbReference>
<dbReference type="SMR" id="B5YH68"/>
<dbReference type="FunCoup" id="B5YH68">
    <property type="interactions" value="439"/>
</dbReference>
<dbReference type="STRING" id="289376.THEYE_A1767"/>
<dbReference type="EnsemblBacteria" id="ACI20539">
    <property type="protein sequence ID" value="ACI20539"/>
    <property type="gene ID" value="THEYE_A1767"/>
</dbReference>
<dbReference type="KEGG" id="tye:THEYE_A1767"/>
<dbReference type="PATRIC" id="fig|289376.4.peg.1723"/>
<dbReference type="eggNOG" id="COG0128">
    <property type="taxonomic scope" value="Bacteria"/>
</dbReference>
<dbReference type="HOGENOM" id="CLU_024321_0_1_0"/>
<dbReference type="InParanoid" id="B5YH68"/>
<dbReference type="OrthoDB" id="9809920at2"/>
<dbReference type="UniPathway" id="UPA00053">
    <property type="reaction ID" value="UER00089"/>
</dbReference>
<dbReference type="Proteomes" id="UP000000718">
    <property type="component" value="Chromosome"/>
</dbReference>
<dbReference type="GO" id="GO:0005737">
    <property type="term" value="C:cytoplasm"/>
    <property type="evidence" value="ECO:0007669"/>
    <property type="project" value="UniProtKB-SubCell"/>
</dbReference>
<dbReference type="GO" id="GO:0003866">
    <property type="term" value="F:3-phosphoshikimate 1-carboxyvinyltransferase activity"/>
    <property type="evidence" value="ECO:0000318"/>
    <property type="project" value="GO_Central"/>
</dbReference>
<dbReference type="GO" id="GO:0008652">
    <property type="term" value="P:amino acid biosynthetic process"/>
    <property type="evidence" value="ECO:0007669"/>
    <property type="project" value="UniProtKB-KW"/>
</dbReference>
<dbReference type="GO" id="GO:0009073">
    <property type="term" value="P:aromatic amino acid family biosynthetic process"/>
    <property type="evidence" value="ECO:0007669"/>
    <property type="project" value="UniProtKB-KW"/>
</dbReference>
<dbReference type="GO" id="GO:0009423">
    <property type="term" value="P:chorismate biosynthetic process"/>
    <property type="evidence" value="ECO:0000318"/>
    <property type="project" value="GO_Central"/>
</dbReference>
<dbReference type="CDD" id="cd01556">
    <property type="entry name" value="EPSP_synthase"/>
    <property type="match status" value="1"/>
</dbReference>
<dbReference type="FunFam" id="3.65.10.10:FF:000005">
    <property type="entry name" value="3-phosphoshikimate 1-carboxyvinyltransferase"/>
    <property type="match status" value="1"/>
</dbReference>
<dbReference type="FunFam" id="3.65.10.10:FF:000006">
    <property type="entry name" value="3-phosphoshikimate 1-carboxyvinyltransferase"/>
    <property type="match status" value="1"/>
</dbReference>
<dbReference type="Gene3D" id="3.65.10.10">
    <property type="entry name" value="Enolpyruvate transferase domain"/>
    <property type="match status" value="2"/>
</dbReference>
<dbReference type="HAMAP" id="MF_00210">
    <property type="entry name" value="EPSP_synth"/>
    <property type="match status" value="1"/>
</dbReference>
<dbReference type="InterPro" id="IPR001986">
    <property type="entry name" value="Enolpyruvate_Tfrase_dom"/>
</dbReference>
<dbReference type="InterPro" id="IPR036968">
    <property type="entry name" value="Enolpyruvate_Tfrase_sf"/>
</dbReference>
<dbReference type="InterPro" id="IPR006264">
    <property type="entry name" value="EPSP_synthase"/>
</dbReference>
<dbReference type="InterPro" id="IPR023193">
    <property type="entry name" value="EPSP_synthase_CS"/>
</dbReference>
<dbReference type="InterPro" id="IPR013792">
    <property type="entry name" value="RNA3'P_cycl/enolpyr_Trfase_a/b"/>
</dbReference>
<dbReference type="NCBIfam" id="TIGR01356">
    <property type="entry name" value="aroA"/>
    <property type="match status" value="1"/>
</dbReference>
<dbReference type="PANTHER" id="PTHR21090">
    <property type="entry name" value="AROM/DEHYDROQUINATE SYNTHASE"/>
    <property type="match status" value="1"/>
</dbReference>
<dbReference type="PANTHER" id="PTHR21090:SF5">
    <property type="entry name" value="PENTAFUNCTIONAL AROM POLYPEPTIDE"/>
    <property type="match status" value="1"/>
</dbReference>
<dbReference type="Pfam" id="PF00275">
    <property type="entry name" value="EPSP_synthase"/>
    <property type="match status" value="1"/>
</dbReference>
<dbReference type="PIRSF" id="PIRSF000505">
    <property type="entry name" value="EPSPS"/>
    <property type="match status" value="1"/>
</dbReference>
<dbReference type="SUPFAM" id="SSF55205">
    <property type="entry name" value="EPT/RTPC-like"/>
    <property type="match status" value="1"/>
</dbReference>
<dbReference type="PROSITE" id="PS00104">
    <property type="entry name" value="EPSP_SYNTHASE_1"/>
    <property type="match status" value="1"/>
</dbReference>
<dbReference type="PROSITE" id="PS00885">
    <property type="entry name" value="EPSP_SYNTHASE_2"/>
    <property type="match status" value="1"/>
</dbReference>